<accession>Q5BIM5</accession>
<accession>A4IFC7</accession>
<organism>
    <name type="scientific">Bos taurus</name>
    <name type="common">Bovine</name>
    <dbReference type="NCBI Taxonomy" id="9913"/>
    <lineage>
        <taxon>Eukaryota</taxon>
        <taxon>Metazoa</taxon>
        <taxon>Chordata</taxon>
        <taxon>Craniata</taxon>
        <taxon>Vertebrata</taxon>
        <taxon>Euteleostomi</taxon>
        <taxon>Mammalia</taxon>
        <taxon>Eutheria</taxon>
        <taxon>Laurasiatheria</taxon>
        <taxon>Artiodactyla</taxon>
        <taxon>Ruminantia</taxon>
        <taxon>Pecora</taxon>
        <taxon>Bovidae</taxon>
        <taxon>Bovinae</taxon>
        <taxon>Bos</taxon>
    </lineage>
</organism>
<proteinExistence type="evidence at transcript level"/>
<feature type="chain" id="PRO_0000245600" description="Protrudin">
    <location>
        <begin position="1"/>
        <end position="404"/>
    </location>
</feature>
<feature type="topological domain" description="Cytoplasmic" evidence="3">
    <location>
        <begin position="1"/>
        <end position="66"/>
    </location>
</feature>
<feature type="transmembrane region" description="Helical" evidence="5">
    <location>
        <begin position="67"/>
        <end position="87"/>
    </location>
</feature>
<feature type="topological domain" description="Lumenal" evidence="3">
    <location>
        <position position="88"/>
    </location>
</feature>
<feature type="transmembrane region" description="Helical" evidence="5">
    <location>
        <begin position="89"/>
        <end position="109"/>
    </location>
</feature>
<feature type="topological domain" description="Cytoplasmic" evidence="3">
    <location>
        <begin position="110"/>
        <end position="187"/>
    </location>
</feature>
<feature type="intramembrane region" description="Helical" evidence="5">
    <location>
        <begin position="188"/>
        <end position="208"/>
    </location>
</feature>
<feature type="topological domain" description="Cytoplasmic" evidence="3">
    <location>
        <begin position="209"/>
        <end position="404"/>
    </location>
</feature>
<feature type="zinc finger region" description="FYVE-type" evidence="6">
    <location>
        <begin position="337"/>
        <end position="403"/>
    </location>
</feature>
<feature type="region of interest" description="Sufficient for localization to endoplasmic reticulum tubular network and for interactions with REEP1, REEP5, ATL1, ATL2, ATL3 and SPAST" evidence="3">
    <location>
        <begin position="1"/>
        <end position="205"/>
    </location>
</feature>
<feature type="region of interest" description="Sufficient for homooligomerization" evidence="3">
    <location>
        <begin position="1"/>
        <end position="92"/>
    </location>
</feature>
<feature type="region of interest" description="Disordered" evidence="7">
    <location>
        <begin position="1"/>
        <end position="20"/>
    </location>
</feature>
<feature type="region of interest" description="Necessary for interaction with RAB11A and function in neurite outgrowth" evidence="1">
    <location>
        <begin position="51"/>
        <end position="64"/>
    </location>
</feature>
<feature type="region of interest" description="Disordered" evidence="7">
    <location>
        <begin position="234"/>
        <end position="286"/>
    </location>
</feature>
<feature type="region of interest" description="Necessary for interaction with KIF5A" evidence="3">
    <location>
        <begin position="271"/>
        <end position="354"/>
    </location>
</feature>
<feature type="region of interest" description="Necessary for interaction with VAPA" evidence="1">
    <location>
        <begin position="286"/>
        <end position="292"/>
    </location>
</feature>
<feature type="compositionally biased region" description="Acidic residues" evidence="7">
    <location>
        <begin position="276"/>
        <end position="286"/>
    </location>
</feature>
<feature type="binding site" evidence="6">
    <location>
        <position position="343"/>
    </location>
    <ligand>
        <name>Zn(2+)</name>
        <dbReference type="ChEBI" id="CHEBI:29105"/>
        <label>1</label>
    </ligand>
</feature>
<feature type="binding site" evidence="6">
    <location>
        <position position="346"/>
    </location>
    <ligand>
        <name>Zn(2+)</name>
        <dbReference type="ChEBI" id="CHEBI:29105"/>
        <label>1</label>
    </ligand>
</feature>
<feature type="binding site" evidence="6">
    <location>
        <position position="359"/>
    </location>
    <ligand>
        <name>Zn(2+)</name>
        <dbReference type="ChEBI" id="CHEBI:29105"/>
        <label>2</label>
    </ligand>
</feature>
<feature type="binding site" evidence="6">
    <location>
        <position position="362"/>
    </location>
    <ligand>
        <name>Zn(2+)</name>
        <dbReference type="ChEBI" id="CHEBI:29105"/>
        <label>2</label>
    </ligand>
</feature>
<feature type="binding site" evidence="6">
    <location>
        <position position="367"/>
    </location>
    <ligand>
        <name>Zn(2+)</name>
        <dbReference type="ChEBI" id="CHEBI:29105"/>
        <label>1</label>
    </ligand>
</feature>
<feature type="binding site" evidence="6">
    <location>
        <position position="370"/>
    </location>
    <ligand>
        <name>Zn(2+)</name>
        <dbReference type="ChEBI" id="CHEBI:29105"/>
        <label>1</label>
    </ligand>
</feature>
<feature type="binding site" evidence="6">
    <location>
        <position position="395"/>
    </location>
    <ligand>
        <name>Zn(2+)</name>
        <dbReference type="ChEBI" id="CHEBI:29105"/>
        <label>2</label>
    </ligand>
</feature>
<feature type="binding site" evidence="6">
    <location>
        <position position="398"/>
    </location>
    <ligand>
        <name>Zn(2+)</name>
        <dbReference type="ChEBI" id="CHEBI:29105"/>
        <label>2</label>
    </ligand>
</feature>
<dbReference type="EMBL" id="BT021199">
    <property type="protein sequence ID" value="AAX31381.1"/>
    <property type="molecule type" value="mRNA"/>
</dbReference>
<dbReference type="EMBL" id="BC134516">
    <property type="protein sequence ID" value="AAI34517.1"/>
    <property type="molecule type" value="mRNA"/>
</dbReference>
<dbReference type="RefSeq" id="NP_001017939.1">
    <property type="nucleotide sequence ID" value="NM_001017939.1"/>
</dbReference>
<dbReference type="RefSeq" id="XP_024841378.1">
    <property type="nucleotide sequence ID" value="XM_024985610.2"/>
</dbReference>
<dbReference type="SMR" id="Q5BIM5"/>
<dbReference type="FunCoup" id="Q5BIM5">
    <property type="interactions" value="3384"/>
</dbReference>
<dbReference type="STRING" id="9913.ENSBTAP00000071500"/>
<dbReference type="PaxDb" id="9913-ENSBTAP00000024705"/>
<dbReference type="GeneID" id="514383"/>
<dbReference type="KEGG" id="bta:514383"/>
<dbReference type="CTD" id="118813"/>
<dbReference type="VEuPathDB" id="HostDB:ENSBTAG00000018564"/>
<dbReference type="eggNOG" id="ENOG502QVKC">
    <property type="taxonomic scope" value="Eukaryota"/>
</dbReference>
<dbReference type="HOGENOM" id="CLU_060341_0_0_1"/>
<dbReference type="InParanoid" id="Q5BIM5"/>
<dbReference type="OrthoDB" id="5975347at2759"/>
<dbReference type="TreeFam" id="TF331044"/>
<dbReference type="Proteomes" id="UP000009136">
    <property type="component" value="Chromosome 26"/>
</dbReference>
<dbReference type="Bgee" id="ENSBTAG00000018564">
    <property type="expression patterns" value="Expressed in retina and 105 other cell types or tissues"/>
</dbReference>
<dbReference type="GO" id="GO:0030424">
    <property type="term" value="C:axon"/>
    <property type="evidence" value="ECO:0000250"/>
    <property type="project" value="UniProtKB"/>
</dbReference>
<dbReference type="GO" id="GO:0030425">
    <property type="term" value="C:dendrite"/>
    <property type="evidence" value="ECO:0000250"/>
    <property type="project" value="UniProtKB"/>
</dbReference>
<dbReference type="GO" id="GO:0005783">
    <property type="term" value="C:endoplasmic reticulum"/>
    <property type="evidence" value="ECO:0000250"/>
    <property type="project" value="UniProtKB"/>
</dbReference>
<dbReference type="GO" id="GO:0005789">
    <property type="term" value="C:endoplasmic reticulum membrane"/>
    <property type="evidence" value="ECO:0000250"/>
    <property type="project" value="UniProtKB"/>
</dbReference>
<dbReference type="GO" id="GO:0071782">
    <property type="term" value="C:endoplasmic reticulum tubular network"/>
    <property type="evidence" value="ECO:0000250"/>
    <property type="project" value="UniProtKB"/>
</dbReference>
<dbReference type="GO" id="GO:0032584">
    <property type="term" value="C:growth cone membrane"/>
    <property type="evidence" value="ECO:0000250"/>
    <property type="project" value="UniProtKB"/>
</dbReference>
<dbReference type="GO" id="GO:0016020">
    <property type="term" value="C:membrane"/>
    <property type="evidence" value="ECO:0000250"/>
    <property type="project" value="UniProtKB"/>
</dbReference>
<dbReference type="GO" id="GO:0055038">
    <property type="term" value="C:recycling endosome membrane"/>
    <property type="evidence" value="ECO:0000250"/>
    <property type="project" value="UniProtKB"/>
</dbReference>
<dbReference type="GO" id="GO:0008270">
    <property type="term" value="F:zinc ion binding"/>
    <property type="evidence" value="ECO:0007669"/>
    <property type="project" value="UniProtKB-KW"/>
</dbReference>
<dbReference type="GO" id="GO:0071787">
    <property type="term" value="P:endoplasmic reticulum tubular network formation"/>
    <property type="evidence" value="ECO:0000250"/>
    <property type="project" value="UniProtKB"/>
</dbReference>
<dbReference type="GO" id="GO:0031175">
    <property type="term" value="P:neuron projection development"/>
    <property type="evidence" value="ECO:0000250"/>
    <property type="project" value="UniProtKB"/>
</dbReference>
<dbReference type="GO" id="GO:0048011">
    <property type="term" value="P:neurotrophin TRK receptor signaling pathway"/>
    <property type="evidence" value="ECO:0000250"/>
    <property type="project" value="UniProtKB"/>
</dbReference>
<dbReference type="GO" id="GO:0045773">
    <property type="term" value="P:positive regulation of axon extension"/>
    <property type="evidence" value="ECO:0000250"/>
    <property type="project" value="UniProtKB"/>
</dbReference>
<dbReference type="GO" id="GO:0072659">
    <property type="term" value="P:protein localization to plasma membrane"/>
    <property type="evidence" value="ECO:0000250"/>
    <property type="project" value="UniProtKB"/>
</dbReference>
<dbReference type="GO" id="GO:0016192">
    <property type="term" value="P:vesicle-mediated transport"/>
    <property type="evidence" value="ECO:0000250"/>
    <property type="project" value="UniProtKB"/>
</dbReference>
<dbReference type="CDD" id="cd15723">
    <property type="entry name" value="FYVE_protrudin"/>
    <property type="match status" value="1"/>
</dbReference>
<dbReference type="FunFam" id="3.30.40.10:FF:000102">
    <property type="entry name" value="protrudin isoform X2"/>
    <property type="match status" value="1"/>
</dbReference>
<dbReference type="Gene3D" id="3.30.40.10">
    <property type="entry name" value="Zinc/RING finger domain, C3HC4 (zinc finger)"/>
    <property type="match status" value="1"/>
</dbReference>
<dbReference type="InterPro" id="IPR042405">
    <property type="entry name" value="Protrudin"/>
</dbReference>
<dbReference type="InterPro" id="IPR000306">
    <property type="entry name" value="Znf_FYVE"/>
</dbReference>
<dbReference type="InterPro" id="IPR017455">
    <property type="entry name" value="Znf_FYVE-rel"/>
</dbReference>
<dbReference type="InterPro" id="IPR011011">
    <property type="entry name" value="Znf_FYVE_PHD"/>
</dbReference>
<dbReference type="InterPro" id="IPR013083">
    <property type="entry name" value="Znf_RING/FYVE/PHD"/>
</dbReference>
<dbReference type="PANTHER" id="PTHR14543">
    <property type="entry name" value="PROTRUDIN"/>
    <property type="match status" value="1"/>
</dbReference>
<dbReference type="PANTHER" id="PTHR14543:SF1">
    <property type="entry name" value="PROTRUDIN"/>
    <property type="match status" value="1"/>
</dbReference>
<dbReference type="Pfam" id="PF01363">
    <property type="entry name" value="FYVE"/>
    <property type="match status" value="1"/>
</dbReference>
<dbReference type="SMART" id="SM00064">
    <property type="entry name" value="FYVE"/>
    <property type="match status" value="1"/>
</dbReference>
<dbReference type="SUPFAM" id="SSF57903">
    <property type="entry name" value="FYVE/PHD zinc finger"/>
    <property type="match status" value="1"/>
</dbReference>
<dbReference type="PROSITE" id="PS50178">
    <property type="entry name" value="ZF_FYVE"/>
    <property type="match status" value="1"/>
</dbReference>
<evidence type="ECO:0000250" key="1"/>
<evidence type="ECO:0000250" key="2">
    <source>
        <dbReference type="UniProtKB" id="Q3TXX3"/>
    </source>
</evidence>
<evidence type="ECO:0000250" key="3">
    <source>
        <dbReference type="UniProtKB" id="Q5T4F4"/>
    </source>
</evidence>
<evidence type="ECO:0000250" key="4">
    <source>
        <dbReference type="UniProtKB" id="Q6P7B7"/>
    </source>
</evidence>
<evidence type="ECO:0000255" key="5"/>
<evidence type="ECO:0000255" key="6">
    <source>
        <dbReference type="PROSITE-ProRule" id="PRU00091"/>
    </source>
</evidence>
<evidence type="ECO:0000256" key="7">
    <source>
        <dbReference type="SAM" id="MobiDB-lite"/>
    </source>
</evidence>
<name>ZFY27_BOVIN</name>
<comment type="function">
    <text evidence="2 3">Key regulator of RAB11-dependent vesicular trafficking during neurite extension through polarized membrane transport. Promotes axonal elongation and contributes to the establishment of neuronal cell polarity. Involved in nerve growth factor-induced neurite formation in VAPA-dependent manner. Contributes to both the formation and stabilization of the tubular ER network. Involved in ER morphogenesis by regulating the sheet-to-tubule balance and possibly the density of tubule interconnections. Acts as an adapter protein that facilitates the interaction of KIF5A with VAPA, VAPB, SURF4, RAB11A, RAB11B and RTN3 and the ZFYVE27-KIF5A complex contributes to the transport of these proteins in neurons. Can induce formation of neurite-like membrane protrusions in non-neuronal cells in a KIF5A/B-dependent manner.</text>
</comment>
<comment type="subunit">
    <text evidence="2 3">Can form homooligomers (monomers, dimers and tetramers). Interacts with RAB11A (GDP-bound form); regulates RAB11A. Interacts with FKBP8; may negatively regulate ZFYVE27 phosphorylation. Interacts with VAPA (via MSP domain); may regulate ZFYVE27 retention in the endoplasmic reticulum and its function in cell projections formation. Interacts with VAPB (via MSP domain). Interacts with RAB11B (GDP-bound form), REEP1, REEP5, ATL1, ATL2, ATL3, SPAST, SURF4, KIF5A, KIF5B, KIF5C and RTN3.</text>
</comment>
<comment type="subcellular location">
    <subcellularLocation>
        <location evidence="4">Recycling endosome membrane</location>
        <topology evidence="5">Multi-pass membrane protein</topology>
    </subcellularLocation>
    <subcellularLocation>
        <location evidence="3">Endoplasmic reticulum membrane</location>
        <topology evidence="5">Multi-pass membrane protein</topology>
    </subcellularLocation>
    <subcellularLocation>
        <location evidence="2">Cell projection</location>
        <location evidence="2">Growth cone membrane</location>
        <topology evidence="5">Multi-pass membrane protein</topology>
    </subcellularLocation>
    <text evidence="2 3">Localizes at both dendrites and axons. Localizes to endoplasmic reticulum tubular network.</text>
</comment>
<comment type="PTM">
    <text evidence="1">Phosphorylated. Phosphorylation is induced by NGF through the MAPK/ERK pathway and modulates interaction with RAB11A (By similarity).</text>
</comment>
<sequence length="404" mass="44777">MQTSEREGCGPEVSPSTVPEATLESLPVPTKLPAFDLFNLVLSYKRLEVYLEPLKDAGDGVRYLLRWQTPLCSLLTCLGLNVLFLTLNEGAWYSVGALMISVPALLGYLQEGCQARLSESELMRRKYHSVRQEDLQRVRLSRPEAVAEVKSFLIQLEALLSRLCGTCEAAYRVLHWENPAVSSQFYGALLGTVCMLYLLPLCWVLALLNSTLFLGNVEFFRVVSEYRASLQRRMNPKQEESAFESPPPSDAGGKGALVDCTPAPTPTEDLTPGSVEEAEEAEPDEEFKDAIEEDDEGAPCPAEDELVLQDNGFLSKNEVLRSKVSRLTERLRKRYPTNNYGSCTGCSATFSVLKKRRNCSNCGNIFCSRCCSFKVPRSSMGATAPEAQRETVFVCASCNQTLSK</sequence>
<keyword id="KW-1003">Cell membrane</keyword>
<keyword id="KW-0966">Cell projection</keyword>
<keyword id="KW-0256">Endoplasmic reticulum</keyword>
<keyword id="KW-0967">Endosome</keyword>
<keyword id="KW-0472">Membrane</keyword>
<keyword id="KW-0479">Metal-binding</keyword>
<keyword id="KW-0597">Phosphoprotein</keyword>
<keyword id="KW-1185">Reference proteome</keyword>
<keyword id="KW-0812">Transmembrane</keyword>
<keyword id="KW-1133">Transmembrane helix</keyword>
<keyword id="KW-0862">Zinc</keyword>
<keyword id="KW-0863">Zinc-finger</keyword>
<gene>
    <name type="primary">ZFYVE27</name>
</gene>
<protein>
    <recommendedName>
        <fullName>Protrudin</fullName>
    </recommendedName>
    <alternativeName>
        <fullName>Zinc finger FYVE domain-containing protein 27</fullName>
    </alternativeName>
</protein>
<reference key="1">
    <citation type="journal article" date="2005" name="BMC Genomics">
        <title>Characterization of 954 bovine full-CDS cDNA sequences.</title>
        <authorList>
            <person name="Harhay G.P."/>
            <person name="Sonstegard T.S."/>
            <person name="Keele J.W."/>
            <person name="Heaton M.P."/>
            <person name="Clawson M.L."/>
            <person name="Snelling W.M."/>
            <person name="Wiedmann R.T."/>
            <person name="Van Tassell C.P."/>
            <person name="Smith T.P.L."/>
        </authorList>
    </citation>
    <scope>NUCLEOTIDE SEQUENCE [LARGE SCALE MRNA]</scope>
</reference>
<reference key="2">
    <citation type="submission" date="2007-03" db="EMBL/GenBank/DDBJ databases">
        <authorList>
            <consortium name="NIH - Mammalian Gene Collection (MGC) project"/>
        </authorList>
    </citation>
    <scope>NUCLEOTIDE SEQUENCE [LARGE SCALE MRNA]</scope>
    <source>
        <strain>Hereford</strain>
        <tissue>Ascending colon</tissue>
    </source>
</reference>